<protein>
    <recommendedName>
        <fullName evidence="1">Ethanolamine ammonia-lyase small subunit</fullName>
        <shortName evidence="1">EAL small subunit</shortName>
        <ecNumber evidence="1">4.3.1.7</ecNumber>
    </recommendedName>
</protein>
<accession>A9KMZ5</accession>
<name>EUTC_LACP7</name>
<proteinExistence type="inferred from homology"/>
<gene>
    <name evidence="1" type="primary">eutC</name>
    <name type="ordered locus">Cphy_2645</name>
</gene>
<sequence>MDEQSLRKMVEQMVEQMVGGGTNVKSTTSTSSVGQGSATAISSECLPDITKIDIKSWFLLDHAKNKEEYLHMKSKTPARLGVGRAGARYKTMTMLRVRADHAAAQDAVFSDVSEEFIKKNKFVFVKTLCKDKDEYLTRPDLGRRFGKEELEVIKKTCGQSPKVLIIVGDGLSSSAIEANVEDMIPAIKQGLSMFQINVPPILFIKYARVGAMDDIGQATDADVICMLVGERPGLVTAESMSAYICYKAKHGVPESKRTVISNIHRGGTTPVEAGAHAAELIKKMLDKKASGIELKG</sequence>
<evidence type="ECO:0000255" key="1">
    <source>
        <dbReference type="HAMAP-Rule" id="MF_00601"/>
    </source>
</evidence>
<reference key="1">
    <citation type="submission" date="2007-11" db="EMBL/GenBank/DDBJ databases">
        <title>Complete genome sequence of Clostridium phytofermentans ISDg.</title>
        <authorList>
            <person name="Leschine S.B."/>
            <person name="Warnick T.A."/>
            <person name="Blanchard J.L."/>
            <person name="Schnell D.J."/>
            <person name="Petit E.L."/>
            <person name="LaTouf W.G."/>
            <person name="Copeland A."/>
            <person name="Lucas S."/>
            <person name="Lapidus A."/>
            <person name="Barry K."/>
            <person name="Glavina del Rio T."/>
            <person name="Dalin E."/>
            <person name="Tice H."/>
            <person name="Pitluck S."/>
            <person name="Kiss H."/>
            <person name="Brettin T."/>
            <person name="Bruce D."/>
            <person name="Detter J.C."/>
            <person name="Han C."/>
            <person name="Kuske C."/>
            <person name="Schmutz J."/>
            <person name="Larimer F."/>
            <person name="Land M."/>
            <person name="Hauser L."/>
            <person name="Kyrpides N."/>
            <person name="Kim E.A."/>
            <person name="Richardson P."/>
        </authorList>
    </citation>
    <scope>NUCLEOTIDE SEQUENCE [LARGE SCALE GENOMIC DNA]</scope>
    <source>
        <strain>ATCC 700394 / DSM 18823 / ISDg</strain>
    </source>
</reference>
<keyword id="KW-1283">Bacterial microcompartment</keyword>
<keyword id="KW-0846">Cobalamin</keyword>
<keyword id="KW-0170">Cobalt</keyword>
<keyword id="KW-0456">Lyase</keyword>
<keyword id="KW-1185">Reference proteome</keyword>
<dbReference type="EC" id="4.3.1.7" evidence="1"/>
<dbReference type="EMBL" id="CP000885">
    <property type="protein sequence ID" value="ABX43006.1"/>
    <property type="molecule type" value="Genomic_DNA"/>
</dbReference>
<dbReference type="RefSeq" id="WP_012200658.1">
    <property type="nucleotide sequence ID" value="NC_010001.1"/>
</dbReference>
<dbReference type="SMR" id="A9KMZ5"/>
<dbReference type="STRING" id="357809.Cphy_2645"/>
<dbReference type="KEGG" id="cpy:Cphy_2645"/>
<dbReference type="eggNOG" id="COG4302">
    <property type="taxonomic scope" value="Bacteria"/>
</dbReference>
<dbReference type="HOGENOM" id="CLU_068224_0_0_9"/>
<dbReference type="OrthoDB" id="114248at2"/>
<dbReference type="UniPathway" id="UPA00560"/>
<dbReference type="Proteomes" id="UP000000370">
    <property type="component" value="Chromosome"/>
</dbReference>
<dbReference type="GO" id="GO:0009350">
    <property type="term" value="C:ethanolamine ammonia-lyase complex"/>
    <property type="evidence" value="ECO:0007669"/>
    <property type="project" value="UniProtKB-UniRule"/>
</dbReference>
<dbReference type="GO" id="GO:0031471">
    <property type="term" value="C:ethanolamine degradation polyhedral organelle"/>
    <property type="evidence" value="ECO:0007669"/>
    <property type="project" value="UniProtKB-UniRule"/>
</dbReference>
<dbReference type="GO" id="GO:0031419">
    <property type="term" value="F:cobalamin binding"/>
    <property type="evidence" value="ECO:0007669"/>
    <property type="project" value="UniProtKB-UniRule"/>
</dbReference>
<dbReference type="GO" id="GO:0008851">
    <property type="term" value="F:ethanolamine ammonia-lyase activity"/>
    <property type="evidence" value="ECO:0007669"/>
    <property type="project" value="UniProtKB-UniRule"/>
</dbReference>
<dbReference type="GO" id="GO:0006520">
    <property type="term" value="P:amino acid metabolic process"/>
    <property type="evidence" value="ECO:0007669"/>
    <property type="project" value="InterPro"/>
</dbReference>
<dbReference type="GO" id="GO:0046336">
    <property type="term" value="P:ethanolamine catabolic process"/>
    <property type="evidence" value="ECO:0007669"/>
    <property type="project" value="UniProtKB-UniRule"/>
</dbReference>
<dbReference type="FunFam" id="3.40.50.11240:FF:000001">
    <property type="entry name" value="Ethanolamine ammonia-lyase light chain"/>
    <property type="match status" value="1"/>
</dbReference>
<dbReference type="Gene3D" id="3.40.50.11240">
    <property type="entry name" value="Ethanolamine ammonia-lyase light chain (EutC)"/>
    <property type="match status" value="1"/>
</dbReference>
<dbReference type="Gene3D" id="1.10.30.40">
    <property type="entry name" value="Ethanolamine ammonia-lyase light chain (EutC), N-terminal domain"/>
    <property type="match status" value="1"/>
</dbReference>
<dbReference type="HAMAP" id="MF_00601">
    <property type="entry name" value="EutC"/>
    <property type="match status" value="1"/>
</dbReference>
<dbReference type="InterPro" id="IPR009246">
    <property type="entry name" value="EutC"/>
</dbReference>
<dbReference type="InterPro" id="IPR042251">
    <property type="entry name" value="EutC_C"/>
</dbReference>
<dbReference type="InterPro" id="IPR042255">
    <property type="entry name" value="EutC_N"/>
</dbReference>
<dbReference type="NCBIfam" id="NF003971">
    <property type="entry name" value="PRK05465.1"/>
    <property type="match status" value="1"/>
</dbReference>
<dbReference type="PANTHER" id="PTHR39330">
    <property type="entry name" value="ETHANOLAMINE AMMONIA-LYASE LIGHT CHAIN"/>
    <property type="match status" value="1"/>
</dbReference>
<dbReference type="PANTHER" id="PTHR39330:SF1">
    <property type="entry name" value="ETHANOLAMINE AMMONIA-LYASE SMALL SUBUNIT"/>
    <property type="match status" value="1"/>
</dbReference>
<dbReference type="Pfam" id="PF05985">
    <property type="entry name" value="EutC"/>
    <property type="match status" value="1"/>
</dbReference>
<dbReference type="PIRSF" id="PIRSF018982">
    <property type="entry name" value="EutC"/>
    <property type="match status" value="1"/>
</dbReference>
<feature type="chain" id="PRO_1000082496" description="Ethanolamine ammonia-lyase small subunit">
    <location>
        <begin position="1"/>
        <end position="296"/>
    </location>
</feature>
<feature type="binding site" evidence="1">
    <location>
        <position position="209"/>
    </location>
    <ligand>
        <name>adenosylcob(III)alamin</name>
        <dbReference type="ChEBI" id="CHEBI:18408"/>
    </ligand>
</feature>
<feature type="binding site" evidence="1">
    <location>
        <position position="230"/>
    </location>
    <ligand>
        <name>adenosylcob(III)alamin</name>
        <dbReference type="ChEBI" id="CHEBI:18408"/>
    </ligand>
</feature>
<comment type="function">
    <text evidence="1">Catalyzes the deamination of various vicinal amino-alcohols to oxo compounds. Allows this organism to utilize ethanolamine as the sole source of nitrogen and carbon in the presence of external vitamin B12.</text>
</comment>
<comment type="catalytic activity">
    <reaction evidence="1">
        <text>ethanolamine = acetaldehyde + NH4(+)</text>
        <dbReference type="Rhea" id="RHEA:15313"/>
        <dbReference type="ChEBI" id="CHEBI:15343"/>
        <dbReference type="ChEBI" id="CHEBI:28938"/>
        <dbReference type="ChEBI" id="CHEBI:57603"/>
        <dbReference type="EC" id="4.3.1.7"/>
    </reaction>
</comment>
<comment type="cofactor">
    <cofactor evidence="1">
        <name>adenosylcob(III)alamin</name>
        <dbReference type="ChEBI" id="CHEBI:18408"/>
    </cofactor>
    <text evidence="1">Binds between the large and small subunits.</text>
</comment>
<comment type="pathway">
    <text evidence="1">Amine and polyamine degradation; ethanolamine degradation.</text>
</comment>
<comment type="subunit">
    <text evidence="1">The basic unit is a heterodimer which dimerizes to form tetramers. The heterotetramers trimerize; 6 large subunits form a core ring with 6 small subunits projecting outwards.</text>
</comment>
<comment type="subcellular location">
    <subcellularLocation>
        <location evidence="1">Bacterial microcompartment</location>
    </subcellularLocation>
</comment>
<comment type="similarity">
    <text evidence="1">Belongs to the EutC family.</text>
</comment>
<organism>
    <name type="scientific">Lachnoclostridium phytofermentans (strain ATCC 700394 / DSM 18823 / ISDg)</name>
    <name type="common">Clostridium phytofermentans</name>
    <dbReference type="NCBI Taxonomy" id="357809"/>
    <lineage>
        <taxon>Bacteria</taxon>
        <taxon>Bacillati</taxon>
        <taxon>Bacillota</taxon>
        <taxon>Clostridia</taxon>
        <taxon>Lachnospirales</taxon>
        <taxon>Lachnospiraceae</taxon>
    </lineage>
</organism>